<name>SIR_SYNE7</name>
<proteinExistence type="inferred from homology"/>
<evidence type="ECO:0000250" key="1"/>
<evidence type="ECO:0000250" key="2">
    <source>
        <dbReference type="UniProtKB" id="P9WJ03"/>
    </source>
</evidence>
<evidence type="ECO:0000305" key="3"/>
<accession>P30008</accession>
<accession>Q31SB8</accession>
<keyword id="KW-0004">4Fe-4S</keyword>
<keyword id="KW-0349">Heme</keyword>
<keyword id="KW-0408">Iron</keyword>
<keyword id="KW-0411">Iron-sulfur</keyword>
<keyword id="KW-0479">Metal-binding</keyword>
<keyword id="KW-0560">Oxidoreductase</keyword>
<keyword id="KW-1185">Reference proteome</keyword>
<keyword id="KW-0883">Thioether bond</keyword>
<organism>
    <name type="scientific">Synechococcus elongatus (strain ATCC 33912 / PCC 7942 / FACHB-805)</name>
    <name type="common">Anacystis nidulans R2</name>
    <dbReference type="NCBI Taxonomy" id="1140"/>
    <lineage>
        <taxon>Bacteria</taxon>
        <taxon>Bacillati</taxon>
        <taxon>Cyanobacteriota</taxon>
        <taxon>Cyanophyceae</taxon>
        <taxon>Synechococcales</taxon>
        <taxon>Synechococcaceae</taxon>
        <taxon>Synechococcus</taxon>
    </lineage>
</organism>
<feature type="chain" id="PRO_0000199953" description="Sulfite reductase [ferredoxin]">
    <location>
        <begin position="1"/>
        <end position="624"/>
    </location>
</feature>
<feature type="binding site" evidence="1">
    <location>
        <position position="446"/>
    </location>
    <ligand>
        <name>[4Fe-4S] cluster</name>
        <dbReference type="ChEBI" id="CHEBI:49883"/>
    </ligand>
</feature>
<feature type="binding site" evidence="1">
    <location>
        <position position="452"/>
    </location>
    <ligand>
        <name>[4Fe-4S] cluster</name>
        <dbReference type="ChEBI" id="CHEBI:49883"/>
    </ligand>
</feature>
<feature type="binding site" evidence="1">
    <location>
        <position position="491"/>
    </location>
    <ligand>
        <name>[4Fe-4S] cluster</name>
        <dbReference type="ChEBI" id="CHEBI:49883"/>
    </ligand>
</feature>
<feature type="binding site" evidence="1">
    <location>
        <position position="495"/>
    </location>
    <ligand>
        <name>[4Fe-4S] cluster</name>
        <dbReference type="ChEBI" id="CHEBI:49883"/>
    </ligand>
</feature>
<feature type="binding site" description="axial binding residue" evidence="1">
    <location>
        <position position="495"/>
    </location>
    <ligand>
        <name>siroheme</name>
        <dbReference type="ChEBI" id="CHEBI:60052"/>
    </ligand>
    <ligandPart>
        <name>Fe</name>
        <dbReference type="ChEBI" id="CHEBI:18248"/>
    </ligandPart>
</feature>
<feature type="cross-link" description="3'-(S-cysteinyl)-tyrosine (Tyr-Cys)" evidence="1">
    <location>
        <begin position="52"/>
        <end position="137"/>
    </location>
</feature>
<feature type="sequence conflict" description="In Ref. 1; CAA77809." evidence="3" ref="1">
    <original>R</original>
    <variation>G</variation>
    <location>
        <position position="587"/>
    </location>
</feature>
<comment type="function">
    <text evidence="2">Catalyzes the reduction of sulfite to sulfide, a step in the biosynthesis of sulfur-containing amino acids and cofactors.</text>
</comment>
<comment type="catalytic activity">
    <reaction evidence="2">
        <text>hydrogen sulfide + 6 oxidized [2Fe-2S]-[ferredoxin] + 3 H2O = sulfite + 6 reduced [2Fe-2S]-[ferredoxin] + 7 H(+)</text>
        <dbReference type="Rhea" id="RHEA:23132"/>
        <dbReference type="Rhea" id="RHEA-COMP:10000"/>
        <dbReference type="Rhea" id="RHEA-COMP:10001"/>
        <dbReference type="ChEBI" id="CHEBI:15377"/>
        <dbReference type="ChEBI" id="CHEBI:15378"/>
        <dbReference type="ChEBI" id="CHEBI:17359"/>
        <dbReference type="ChEBI" id="CHEBI:29919"/>
        <dbReference type="ChEBI" id="CHEBI:33737"/>
        <dbReference type="ChEBI" id="CHEBI:33738"/>
        <dbReference type="EC" id="1.8.7.1"/>
    </reaction>
</comment>
<comment type="cofactor">
    <cofactor>
        <name>siroheme</name>
        <dbReference type="ChEBI" id="CHEBI:60052"/>
    </cofactor>
    <text>Binds 1 siroheme per subunit.</text>
</comment>
<comment type="cofactor">
    <cofactor>
        <name>[4Fe-4S] cluster</name>
        <dbReference type="ChEBI" id="CHEBI:49883"/>
    </cofactor>
    <text>Binds 1 [4Fe-4S] cluster per subunit.</text>
</comment>
<comment type="subunit">
    <text>Monomer.</text>
</comment>
<comment type="similarity">
    <text evidence="3">Belongs to the nitrite and sulfite reductase 4Fe-4S domain family.</text>
</comment>
<reference key="1">
    <citation type="journal article" date="1993" name="Biochim. Biophys. Acta">
        <title>The ferredoxin:sulphite reductase gene from Synechococcus PCC7942.</title>
        <authorList>
            <person name="Gisselmann G."/>
            <person name="Klausmeier P."/>
            <person name="Schwenn J.D."/>
        </authorList>
    </citation>
    <scope>NUCLEOTIDE SEQUENCE [GENOMIC DNA]</scope>
</reference>
<reference key="2">
    <citation type="submission" date="2005-08" db="EMBL/GenBank/DDBJ databases">
        <title>Complete sequence of chromosome 1 of Synechococcus elongatus PCC 7942.</title>
        <authorList>
            <consortium name="US DOE Joint Genome Institute"/>
            <person name="Copeland A."/>
            <person name="Lucas S."/>
            <person name="Lapidus A."/>
            <person name="Barry K."/>
            <person name="Detter J.C."/>
            <person name="Glavina T."/>
            <person name="Hammon N."/>
            <person name="Israni S."/>
            <person name="Pitluck S."/>
            <person name="Schmutz J."/>
            <person name="Larimer F."/>
            <person name="Land M."/>
            <person name="Kyrpides N."/>
            <person name="Lykidis A."/>
            <person name="Golden S."/>
            <person name="Richardson P."/>
        </authorList>
    </citation>
    <scope>NUCLEOTIDE SEQUENCE [LARGE SCALE GENOMIC DNA]</scope>
    <source>
        <strain>ATCC 33912 / PCC 7942 / FACHB-805</strain>
    </source>
</reference>
<protein>
    <recommendedName>
        <fullName>Sulfite reductase [ferredoxin]</fullName>
        <ecNumber>1.8.7.1</ecNumber>
    </recommendedName>
</protein>
<dbReference type="EC" id="1.8.7.1"/>
<dbReference type="EMBL" id="Z11755">
    <property type="protein sequence ID" value="CAA77809.1"/>
    <property type="molecule type" value="Genomic_DNA"/>
</dbReference>
<dbReference type="EMBL" id="CP000100">
    <property type="protein sequence ID" value="ABB56051.1"/>
    <property type="molecule type" value="Genomic_DNA"/>
</dbReference>
<dbReference type="RefSeq" id="WP_011377403.1">
    <property type="nucleotide sequence ID" value="NZ_JACJTX010000002.1"/>
</dbReference>
<dbReference type="SMR" id="P30008"/>
<dbReference type="STRING" id="1140.Synpcc7942_0019"/>
<dbReference type="PaxDb" id="1140-Synpcc7942_0019"/>
<dbReference type="GeneID" id="72428828"/>
<dbReference type="KEGG" id="syf:Synpcc7942_0019"/>
<dbReference type="eggNOG" id="COG0155">
    <property type="taxonomic scope" value="Bacteria"/>
</dbReference>
<dbReference type="HOGENOM" id="CLU_001975_3_0_3"/>
<dbReference type="OrthoDB" id="9803707at2"/>
<dbReference type="BioCyc" id="SYNEL:SYNPCC7942_0019-MONOMER"/>
<dbReference type="Proteomes" id="UP000889800">
    <property type="component" value="Chromosome"/>
</dbReference>
<dbReference type="GO" id="GO:0009337">
    <property type="term" value="C:sulfite reductase complex (NADPH)"/>
    <property type="evidence" value="ECO:0007669"/>
    <property type="project" value="TreeGrafter"/>
</dbReference>
<dbReference type="GO" id="GO:0051539">
    <property type="term" value="F:4 iron, 4 sulfur cluster binding"/>
    <property type="evidence" value="ECO:0007669"/>
    <property type="project" value="UniProtKB-KW"/>
</dbReference>
<dbReference type="GO" id="GO:0020037">
    <property type="term" value="F:heme binding"/>
    <property type="evidence" value="ECO:0007669"/>
    <property type="project" value="InterPro"/>
</dbReference>
<dbReference type="GO" id="GO:0046872">
    <property type="term" value="F:metal ion binding"/>
    <property type="evidence" value="ECO:0007669"/>
    <property type="project" value="UniProtKB-KW"/>
</dbReference>
<dbReference type="GO" id="GO:0050311">
    <property type="term" value="F:sulfite reductase (ferredoxin) activity"/>
    <property type="evidence" value="ECO:0007669"/>
    <property type="project" value="UniProtKB-EC"/>
</dbReference>
<dbReference type="GO" id="GO:0016002">
    <property type="term" value="F:sulfite reductase activity"/>
    <property type="evidence" value="ECO:0007669"/>
    <property type="project" value="TreeGrafter"/>
</dbReference>
<dbReference type="GO" id="GO:0000103">
    <property type="term" value="P:sulfate assimilation"/>
    <property type="evidence" value="ECO:0007669"/>
    <property type="project" value="TreeGrafter"/>
</dbReference>
<dbReference type="FunFam" id="3.30.413.10:FF:000008">
    <property type="entry name" value="Sulfite reductase [ferredoxin], chloroplastic"/>
    <property type="match status" value="1"/>
</dbReference>
<dbReference type="FunFam" id="3.30.413.10:FF:000014">
    <property type="entry name" value="Sulfite reductase [ferredoxin], chloroplastic"/>
    <property type="match status" value="1"/>
</dbReference>
<dbReference type="Gene3D" id="3.30.413.10">
    <property type="entry name" value="Sulfite Reductase Hemoprotein, domain 1"/>
    <property type="match status" value="2"/>
</dbReference>
<dbReference type="InterPro" id="IPR005117">
    <property type="entry name" value="NiRdtase/SiRdtase_haem-b_fer"/>
</dbReference>
<dbReference type="InterPro" id="IPR036136">
    <property type="entry name" value="Nit/Sulf_reduc_fer-like_dom_sf"/>
</dbReference>
<dbReference type="InterPro" id="IPR006067">
    <property type="entry name" value="NO2/SO3_Rdtase_4Fe4S_dom"/>
</dbReference>
<dbReference type="InterPro" id="IPR045169">
    <property type="entry name" value="NO2/SO3_Rdtase_4Fe4S_prot"/>
</dbReference>
<dbReference type="InterPro" id="IPR045854">
    <property type="entry name" value="NO2/SO3_Rdtase_4Fe4S_sf"/>
</dbReference>
<dbReference type="InterPro" id="IPR006066">
    <property type="entry name" value="NO2/SO3_Rdtase_FeS/sirohaem_BS"/>
</dbReference>
<dbReference type="InterPro" id="IPR011787">
    <property type="entry name" value="SiR_ferredoxin-dep"/>
</dbReference>
<dbReference type="NCBIfam" id="NF010029">
    <property type="entry name" value="PRK13504.1"/>
    <property type="match status" value="1"/>
</dbReference>
<dbReference type="NCBIfam" id="TIGR02042">
    <property type="entry name" value="sir"/>
    <property type="match status" value="1"/>
</dbReference>
<dbReference type="PANTHER" id="PTHR11493:SF47">
    <property type="entry name" value="SULFITE REDUCTASE [NADPH] SUBUNIT BETA"/>
    <property type="match status" value="1"/>
</dbReference>
<dbReference type="PANTHER" id="PTHR11493">
    <property type="entry name" value="SULFITE REDUCTASE [NADPH] SUBUNIT BETA-RELATED"/>
    <property type="match status" value="1"/>
</dbReference>
<dbReference type="Pfam" id="PF01077">
    <property type="entry name" value="NIR_SIR"/>
    <property type="match status" value="1"/>
</dbReference>
<dbReference type="Pfam" id="PF03460">
    <property type="entry name" value="NIR_SIR_ferr"/>
    <property type="match status" value="2"/>
</dbReference>
<dbReference type="PRINTS" id="PR00397">
    <property type="entry name" value="SIROHAEM"/>
</dbReference>
<dbReference type="SUPFAM" id="SSF56014">
    <property type="entry name" value="Nitrite and sulphite reductase 4Fe-4S domain-like"/>
    <property type="match status" value="2"/>
</dbReference>
<dbReference type="SUPFAM" id="SSF55124">
    <property type="entry name" value="Nitrite/Sulfite reductase N-terminal domain-like"/>
    <property type="match status" value="2"/>
</dbReference>
<dbReference type="PROSITE" id="PS00365">
    <property type="entry name" value="NIR_SIR"/>
    <property type="match status" value="1"/>
</dbReference>
<sequence>MSPTAAPQKLSKVEDLKARSQYLLEPILSQLQEESTHFNEDGIQILKFHGSYQQDNRDNRVKGQEKDFQFMLRLRSPGGYIPPQLYLTLDQLADDYGNGTLRATTRQAFQLHGILKRDLKTVIRRIVENLGSTISACGDVNRNVMAPPAPFRDRPEYEWARTYANNIADLLTPESGAYYELWLDGEKVLSGEPDPAVLAARRNPKGRVADSVEPLYSDRYLPRKFKIAVTVPGDNSIDLFTQDIGLVVIGNDRGELEGFNVYVGGGMGRTHNKEETFARLADPLGFVPAADIYAAVQAIVATQRDYGDRSNRRHARMKYLIHDWGIAKFKEAVESVFGKAIAPVRELPPFRYRDYLGWHEQGDGKWFLGLPITSGRIKDDGNWQLRSALREIVSRWQLPLLLTGSQDVLIYDVQPGDRAAIDKLLRDRGVHTVEAIDSLQRYAMACPALPTCGLAITESERALPGLLVRIRRLLEEQGLPDEHFVVRMTGCPNGCARPYMAELAFVGSAPNTYQLWLGGSPDQTRLARPFIDRLADGDVETQLRPLFVFFKQSRQAGESFGDFCDRVGFDALRQFSESYQHEAAKPRYRVGLRADVHGRLKAEADKRGVSLTDLACEAIAAYLR</sequence>
<gene>
    <name type="primary">sir</name>
    <name type="ordered locus">Synpcc7942_0019</name>
</gene>